<accession>Q9XBK3</accession>
<proteinExistence type="inferred from homology"/>
<comment type="similarity">
    <text evidence="1">Belongs to the universal ribosomal protein uS2 family.</text>
</comment>
<evidence type="ECO:0000305" key="1"/>
<reference key="1">
    <citation type="journal article" date="2004" name="Nucleic Acids Res.">
        <title>The genome sequence of Bacillus cereus ATCC 10987 reveals metabolic adaptations and a large plasmid related to Bacillus anthracis pXO1.</title>
        <authorList>
            <person name="Rasko D.A."/>
            <person name="Ravel J."/>
            <person name="Oekstad O.A."/>
            <person name="Helgason E."/>
            <person name="Cer R.Z."/>
            <person name="Jiang L."/>
            <person name="Shores K.A."/>
            <person name="Fouts D.E."/>
            <person name="Tourasse N.J."/>
            <person name="Angiuoli S.V."/>
            <person name="Kolonay J.F."/>
            <person name="Nelson W.C."/>
            <person name="Kolstoe A.-B."/>
            <person name="Fraser C.M."/>
            <person name="Read T.D."/>
        </authorList>
    </citation>
    <scope>NUCLEOTIDE SEQUENCE [LARGE SCALE GENOMIC DNA]</scope>
    <source>
        <strain>ATCC 10987 / NRS 248</strain>
    </source>
</reference>
<reference key="2">
    <citation type="journal article" date="1999" name="Microbiology">
        <title>Genome organization is not conserved between Bacillus cereus and Bacillus subtilis.</title>
        <authorList>
            <person name="Oekstad O.A."/>
            <person name="Hegna I.K."/>
            <person name="Lindbaeck T."/>
            <person name="Rishovd A.-L."/>
            <person name="Kolstoe A.-B."/>
        </authorList>
    </citation>
    <scope>NUCLEOTIDE SEQUENCE [GENOMIC DNA] OF 167-233</scope>
    <source>
        <strain>ATCC 10987 / NRS 248</strain>
    </source>
</reference>
<protein>
    <recommendedName>
        <fullName evidence="1">Small ribosomal subunit protein uS2</fullName>
    </recommendedName>
    <alternativeName>
        <fullName>30S ribosomal protein S2</fullName>
    </alternativeName>
</protein>
<dbReference type="EMBL" id="AE017194">
    <property type="protein sequence ID" value="AAS42773.1"/>
    <property type="molecule type" value="Genomic_DNA"/>
</dbReference>
<dbReference type="EMBL" id="AJ010135">
    <property type="protein sequence ID" value="CAB40591.1"/>
    <property type="molecule type" value="Genomic_DNA"/>
</dbReference>
<dbReference type="SMR" id="Q9XBK3"/>
<dbReference type="KEGG" id="bca:BCE_3868"/>
<dbReference type="HOGENOM" id="CLU_040318_1_2_9"/>
<dbReference type="Proteomes" id="UP000002527">
    <property type="component" value="Chromosome"/>
</dbReference>
<dbReference type="GO" id="GO:0022627">
    <property type="term" value="C:cytosolic small ribosomal subunit"/>
    <property type="evidence" value="ECO:0007669"/>
    <property type="project" value="TreeGrafter"/>
</dbReference>
<dbReference type="GO" id="GO:0003735">
    <property type="term" value="F:structural constituent of ribosome"/>
    <property type="evidence" value="ECO:0007669"/>
    <property type="project" value="InterPro"/>
</dbReference>
<dbReference type="GO" id="GO:0006412">
    <property type="term" value="P:translation"/>
    <property type="evidence" value="ECO:0007669"/>
    <property type="project" value="UniProtKB-UniRule"/>
</dbReference>
<dbReference type="CDD" id="cd01425">
    <property type="entry name" value="RPS2"/>
    <property type="match status" value="1"/>
</dbReference>
<dbReference type="FunFam" id="1.10.287.610:FF:000001">
    <property type="entry name" value="30S ribosomal protein S2"/>
    <property type="match status" value="1"/>
</dbReference>
<dbReference type="Gene3D" id="3.40.50.10490">
    <property type="entry name" value="Glucose-6-phosphate isomerase like protein, domain 1"/>
    <property type="match status" value="1"/>
</dbReference>
<dbReference type="Gene3D" id="1.10.287.610">
    <property type="entry name" value="Helix hairpin bin"/>
    <property type="match status" value="1"/>
</dbReference>
<dbReference type="HAMAP" id="MF_00291_B">
    <property type="entry name" value="Ribosomal_uS2_B"/>
    <property type="match status" value="1"/>
</dbReference>
<dbReference type="InterPro" id="IPR001865">
    <property type="entry name" value="Ribosomal_uS2"/>
</dbReference>
<dbReference type="InterPro" id="IPR005706">
    <property type="entry name" value="Ribosomal_uS2_bac/mit/plastid"/>
</dbReference>
<dbReference type="InterPro" id="IPR018130">
    <property type="entry name" value="Ribosomal_uS2_CS"/>
</dbReference>
<dbReference type="InterPro" id="IPR023591">
    <property type="entry name" value="Ribosomal_uS2_flav_dom_sf"/>
</dbReference>
<dbReference type="NCBIfam" id="TIGR01011">
    <property type="entry name" value="rpsB_bact"/>
    <property type="match status" value="1"/>
</dbReference>
<dbReference type="PANTHER" id="PTHR12534">
    <property type="entry name" value="30S RIBOSOMAL PROTEIN S2 PROKARYOTIC AND ORGANELLAR"/>
    <property type="match status" value="1"/>
</dbReference>
<dbReference type="PANTHER" id="PTHR12534:SF0">
    <property type="entry name" value="SMALL RIBOSOMAL SUBUNIT PROTEIN US2M"/>
    <property type="match status" value="1"/>
</dbReference>
<dbReference type="Pfam" id="PF00318">
    <property type="entry name" value="Ribosomal_S2"/>
    <property type="match status" value="1"/>
</dbReference>
<dbReference type="PRINTS" id="PR00395">
    <property type="entry name" value="RIBOSOMALS2"/>
</dbReference>
<dbReference type="SUPFAM" id="SSF52313">
    <property type="entry name" value="Ribosomal protein S2"/>
    <property type="match status" value="1"/>
</dbReference>
<dbReference type="PROSITE" id="PS00962">
    <property type="entry name" value="RIBOSOMAL_S2_1"/>
    <property type="match status" value="1"/>
</dbReference>
<dbReference type="PROSITE" id="PS00963">
    <property type="entry name" value="RIBOSOMAL_S2_2"/>
    <property type="match status" value="1"/>
</dbReference>
<organism>
    <name type="scientific">Bacillus cereus (strain ATCC 10987 / NRS 248)</name>
    <dbReference type="NCBI Taxonomy" id="222523"/>
    <lineage>
        <taxon>Bacteria</taxon>
        <taxon>Bacillati</taxon>
        <taxon>Bacillota</taxon>
        <taxon>Bacilli</taxon>
        <taxon>Bacillales</taxon>
        <taxon>Bacillaceae</taxon>
        <taxon>Bacillus</taxon>
        <taxon>Bacillus cereus group</taxon>
    </lineage>
</organism>
<keyword id="KW-0687">Ribonucleoprotein</keyword>
<keyword id="KW-0689">Ribosomal protein</keyword>
<feature type="chain" id="PRO_0000134123" description="Small ribosomal subunit protein uS2">
    <location>
        <begin position="1"/>
        <end position="233"/>
    </location>
</feature>
<name>RS2_BACC1</name>
<gene>
    <name type="primary">rpsB</name>
    <name type="ordered locus">BCE_3868</name>
</gene>
<sequence>MSVISMKQLLEAGVHFGHQTRRWNPKMKRYIFTERNGIYIIDLQKTVKKVEEAFKVMRDIAAEGGDILFVGTKKQAQEAIKEEATRAGMYFVNQRWLGGTLTNFQTIQKRIKRLKDIERMQEDGTFEVLPKKEVVQLKKELERLEKFLGGIKDMKGLPSALFVVDPRKERIAVAEARKLHIPIIGIVDTNCDPDEIDHVIPANDDAIRAVKLLTSKMADAILEAKQGEETVTA</sequence>